<comment type="function">
    <text evidence="1">Amino acid transporter importing serine, an essential substrate of the mitochondrial branch of the one-carbon pathway, into mitochondria. Mitochondrial serine is then converted to glycine and formate, which exits to the cytosol where it is used to generate the charged folates that serve as one-carbon donors. May also transport other amino acids including alanine and cysteine.</text>
</comment>
<comment type="catalytic activity">
    <reaction evidence="1">
        <text>L-serine(in) = L-serine(out)</text>
        <dbReference type="Rhea" id="RHEA:35031"/>
        <dbReference type="ChEBI" id="CHEBI:33384"/>
    </reaction>
</comment>
<comment type="catalytic activity">
    <reaction evidence="1">
        <text>L-alanine(in) = L-alanine(out)</text>
        <dbReference type="Rhea" id="RHEA:70719"/>
        <dbReference type="ChEBI" id="CHEBI:57972"/>
    </reaction>
</comment>
<comment type="catalytic activity">
    <reaction evidence="1">
        <text>L-cysteine(in) = L-cysteine(out)</text>
        <dbReference type="Rhea" id="RHEA:29655"/>
        <dbReference type="ChEBI" id="CHEBI:35235"/>
    </reaction>
</comment>
<comment type="subcellular location">
    <subcellularLocation>
        <location evidence="1">Mitochondrion inner membrane</location>
        <topology evidence="2">Multi-pass membrane protein</topology>
    </subcellularLocation>
</comment>
<comment type="similarity">
    <text evidence="3">Belongs to the sideroflexin family.</text>
</comment>
<feature type="initiator methionine" description="Removed" evidence="1">
    <location>
        <position position="1"/>
    </location>
</feature>
<feature type="chain" id="PRO_0000350611" description="Sideroflexin-1">
    <location>
        <begin position="2"/>
        <end position="322"/>
    </location>
</feature>
<feature type="topological domain" description="Mitochondrial matrix" evidence="1">
    <location>
        <begin position="2"/>
        <end position="102"/>
    </location>
</feature>
<feature type="transmembrane region" description="Helical" evidence="2">
    <location>
        <begin position="103"/>
        <end position="120"/>
    </location>
</feature>
<feature type="topological domain" description="Mitochondrial intermembrane" evidence="3">
    <location>
        <begin position="121"/>
        <end position="146"/>
    </location>
</feature>
<feature type="transmembrane region" description="Helical" evidence="2">
    <location>
        <begin position="147"/>
        <end position="167"/>
    </location>
</feature>
<feature type="topological domain" description="Mitochondrial matrix" evidence="3">
    <location>
        <begin position="168"/>
        <end position="174"/>
    </location>
</feature>
<feature type="transmembrane region" description="Helical" evidence="2">
    <location>
        <begin position="175"/>
        <end position="195"/>
    </location>
</feature>
<feature type="topological domain" description="Mitochondrial intermembrane" evidence="3">
    <location>
        <begin position="196"/>
        <end position="228"/>
    </location>
</feature>
<feature type="transmembrane region" description="Helical" evidence="2">
    <location>
        <begin position="229"/>
        <end position="249"/>
    </location>
</feature>
<feature type="topological domain" description="Mitochondrial matrix" evidence="3">
    <location>
        <begin position="250"/>
        <end position="266"/>
    </location>
</feature>
<feature type="transmembrane region" description="Helical" evidence="2">
    <location>
        <begin position="267"/>
        <end position="287"/>
    </location>
</feature>
<feature type="topological domain" description="Mitochondrial intermembrane" evidence="1">
    <location>
        <begin position="288"/>
        <end position="322"/>
    </location>
</feature>
<feature type="modified residue" description="N-acetylserine" evidence="1">
    <location>
        <position position="2"/>
    </location>
</feature>
<name>SFXN1_SHEEP</name>
<accession>B2LU20</accession>
<proteinExistence type="evidence at transcript level"/>
<protein>
    <recommendedName>
        <fullName>Sideroflexin-1</fullName>
    </recommendedName>
</protein>
<reference key="1">
    <citation type="submission" date="2008-03" db="EMBL/GenBank/DDBJ databases">
        <title>Molecular clone and sequence analysis of SFXN1 from black-boned sheep (Ovis aries).</title>
        <authorList>
            <person name="Deng W."/>
        </authorList>
    </citation>
    <scope>NUCLEOTIDE SEQUENCE [MRNA]</scope>
</reference>
<sequence>MSGELPPNINIKEPRWDQSTFIGRAKHFFTVTDPRNILLTNAQLEAARKVVHDYRQGIVPSGLTENELWRAKYIYDSAFHPDTGEKMILIGRMSAQVPMNMTITGCMMTFYRTTPAVLFWQWVNQSFNAVVNYTNRSGDAPLTVNELGTAYVSATTGAVATALGLNALTKRVSPLVGRFVPFAAVAAANCINIPLMRQRELKVGIPVTDENGNRLGESASAAKQAITQVVVSRILMAAPGMAIPPFIMNTLEKKAFLKRFPWMSAPVQVGIVGFCLVFATPLCCALFPQKSSMSVTSLEAELQARIRETYPELRRVYFNKGL</sequence>
<evidence type="ECO:0000250" key="1">
    <source>
        <dbReference type="UniProtKB" id="Q9H9B4"/>
    </source>
</evidence>
<evidence type="ECO:0000255" key="2"/>
<evidence type="ECO:0000305" key="3"/>
<gene>
    <name type="primary">SFXN1</name>
</gene>
<keyword id="KW-0007">Acetylation</keyword>
<keyword id="KW-0029">Amino-acid transport</keyword>
<keyword id="KW-0472">Membrane</keyword>
<keyword id="KW-0496">Mitochondrion</keyword>
<keyword id="KW-0999">Mitochondrion inner membrane</keyword>
<keyword id="KW-0554">One-carbon metabolism</keyword>
<keyword id="KW-1185">Reference proteome</keyword>
<keyword id="KW-0812">Transmembrane</keyword>
<keyword id="KW-1133">Transmembrane helix</keyword>
<keyword id="KW-0813">Transport</keyword>
<organism>
    <name type="scientific">Ovis aries</name>
    <name type="common">Sheep</name>
    <dbReference type="NCBI Taxonomy" id="9940"/>
    <lineage>
        <taxon>Eukaryota</taxon>
        <taxon>Metazoa</taxon>
        <taxon>Chordata</taxon>
        <taxon>Craniata</taxon>
        <taxon>Vertebrata</taxon>
        <taxon>Euteleostomi</taxon>
        <taxon>Mammalia</taxon>
        <taxon>Eutheria</taxon>
        <taxon>Laurasiatheria</taxon>
        <taxon>Artiodactyla</taxon>
        <taxon>Ruminantia</taxon>
        <taxon>Pecora</taxon>
        <taxon>Bovidae</taxon>
        <taxon>Caprinae</taxon>
        <taxon>Ovis</taxon>
    </lineage>
</organism>
<dbReference type="EMBL" id="EU583468">
    <property type="protein sequence ID" value="ACB97620.1"/>
    <property type="molecule type" value="mRNA"/>
</dbReference>
<dbReference type="RefSeq" id="NP_001119822.1">
    <property type="nucleotide sequence ID" value="NM_001126350.1"/>
</dbReference>
<dbReference type="STRING" id="9940.ENSOARP00000017892"/>
<dbReference type="PaxDb" id="9940-ENSOARP00000017892"/>
<dbReference type="GeneID" id="100145864"/>
<dbReference type="KEGG" id="oas:100145864"/>
<dbReference type="CTD" id="94081"/>
<dbReference type="eggNOG" id="KOG3767">
    <property type="taxonomic scope" value="Eukaryota"/>
</dbReference>
<dbReference type="OrthoDB" id="6608471at2759"/>
<dbReference type="Proteomes" id="UP000002356">
    <property type="component" value="Unplaced"/>
</dbReference>
<dbReference type="GO" id="GO:0005743">
    <property type="term" value="C:mitochondrial inner membrane"/>
    <property type="evidence" value="ECO:0000250"/>
    <property type="project" value="UniProtKB"/>
</dbReference>
<dbReference type="GO" id="GO:0015180">
    <property type="term" value="F:L-alanine transmembrane transporter activity"/>
    <property type="evidence" value="ECO:0000250"/>
    <property type="project" value="UniProtKB"/>
</dbReference>
<dbReference type="GO" id="GO:0015194">
    <property type="term" value="F:L-serine transmembrane transporter activity"/>
    <property type="evidence" value="ECO:0000250"/>
    <property type="project" value="UniProtKB"/>
</dbReference>
<dbReference type="GO" id="GO:0015075">
    <property type="term" value="F:monoatomic ion transmembrane transporter activity"/>
    <property type="evidence" value="ECO:0007669"/>
    <property type="project" value="InterPro"/>
</dbReference>
<dbReference type="GO" id="GO:0015808">
    <property type="term" value="P:L-alanine transport"/>
    <property type="evidence" value="ECO:0000250"/>
    <property type="project" value="UniProtKB"/>
</dbReference>
<dbReference type="GO" id="GO:0015825">
    <property type="term" value="P:L-serine transport"/>
    <property type="evidence" value="ECO:0000250"/>
    <property type="project" value="UniProtKB"/>
</dbReference>
<dbReference type="GO" id="GO:0006730">
    <property type="term" value="P:one-carbon metabolic process"/>
    <property type="evidence" value="ECO:0000250"/>
    <property type="project" value="UniProtKB"/>
</dbReference>
<dbReference type="GO" id="GO:0140300">
    <property type="term" value="P:serine import into mitochondrion"/>
    <property type="evidence" value="ECO:0000250"/>
    <property type="project" value="UniProtKB"/>
</dbReference>
<dbReference type="InterPro" id="IPR004686">
    <property type="entry name" value="Mtc"/>
</dbReference>
<dbReference type="NCBIfam" id="TIGR00798">
    <property type="entry name" value="mtc"/>
    <property type="match status" value="1"/>
</dbReference>
<dbReference type="PANTHER" id="PTHR11153">
    <property type="entry name" value="SIDEROFLEXIN"/>
    <property type="match status" value="1"/>
</dbReference>
<dbReference type="PANTHER" id="PTHR11153:SF8">
    <property type="entry name" value="SIDEROFLEXIN-1"/>
    <property type="match status" value="1"/>
</dbReference>
<dbReference type="Pfam" id="PF03820">
    <property type="entry name" value="SFXNs"/>
    <property type="match status" value="1"/>
</dbReference>